<protein>
    <recommendedName>
        <fullName evidence="1">Phosphatidylglycerol--prolipoprotein diacylglyceryl transferase</fullName>
        <ecNumber evidence="1">2.5.1.145</ecNumber>
    </recommendedName>
</protein>
<dbReference type="EC" id="2.5.1.145" evidence="1"/>
<dbReference type="EMBL" id="AE013598">
    <property type="protein sequence ID" value="AAW77007.1"/>
    <property type="molecule type" value="Genomic_DNA"/>
</dbReference>
<dbReference type="SMR" id="Q5GWB4"/>
<dbReference type="STRING" id="291331.XOO3753"/>
<dbReference type="KEGG" id="xoo:XOO3753"/>
<dbReference type="HOGENOM" id="CLU_013386_1_0_6"/>
<dbReference type="UniPathway" id="UPA00664"/>
<dbReference type="Proteomes" id="UP000006735">
    <property type="component" value="Chromosome"/>
</dbReference>
<dbReference type="GO" id="GO:0005886">
    <property type="term" value="C:plasma membrane"/>
    <property type="evidence" value="ECO:0007669"/>
    <property type="project" value="UniProtKB-SubCell"/>
</dbReference>
<dbReference type="GO" id="GO:0008961">
    <property type="term" value="F:phosphatidylglycerol-prolipoprotein diacylglyceryl transferase activity"/>
    <property type="evidence" value="ECO:0007669"/>
    <property type="project" value="UniProtKB-UniRule"/>
</dbReference>
<dbReference type="GO" id="GO:0042158">
    <property type="term" value="P:lipoprotein biosynthetic process"/>
    <property type="evidence" value="ECO:0007669"/>
    <property type="project" value="UniProtKB-UniRule"/>
</dbReference>
<dbReference type="HAMAP" id="MF_01147">
    <property type="entry name" value="Lgt"/>
    <property type="match status" value="1"/>
</dbReference>
<dbReference type="InterPro" id="IPR001640">
    <property type="entry name" value="Lgt"/>
</dbReference>
<dbReference type="NCBIfam" id="TIGR00544">
    <property type="entry name" value="lgt"/>
    <property type="match status" value="1"/>
</dbReference>
<dbReference type="PANTHER" id="PTHR30589:SF0">
    <property type="entry name" value="PHOSPHATIDYLGLYCEROL--PROLIPOPROTEIN DIACYLGLYCERYL TRANSFERASE"/>
    <property type="match status" value="1"/>
</dbReference>
<dbReference type="PANTHER" id="PTHR30589">
    <property type="entry name" value="PROLIPOPROTEIN DIACYLGLYCERYL TRANSFERASE"/>
    <property type="match status" value="1"/>
</dbReference>
<dbReference type="Pfam" id="PF01790">
    <property type="entry name" value="LGT"/>
    <property type="match status" value="1"/>
</dbReference>
<dbReference type="PROSITE" id="PS01311">
    <property type="entry name" value="LGT"/>
    <property type="match status" value="1"/>
</dbReference>
<reference key="1">
    <citation type="journal article" date="2005" name="Nucleic Acids Res.">
        <title>The genome sequence of Xanthomonas oryzae pathovar oryzae KACC10331, the bacterial blight pathogen of rice.</title>
        <authorList>
            <person name="Lee B.-M."/>
            <person name="Park Y.-J."/>
            <person name="Park D.-S."/>
            <person name="Kang H.-W."/>
            <person name="Kim J.-G."/>
            <person name="Song E.-S."/>
            <person name="Park I.-C."/>
            <person name="Yoon U.-H."/>
            <person name="Hahn J.-H."/>
            <person name="Koo B.-S."/>
            <person name="Lee G.-B."/>
            <person name="Kim H."/>
            <person name="Park H.-S."/>
            <person name="Yoon K.-O."/>
            <person name="Kim J.-H."/>
            <person name="Jung C.-H."/>
            <person name="Koh N.-H."/>
            <person name="Seo J.-S."/>
            <person name="Go S.-J."/>
        </authorList>
    </citation>
    <scope>NUCLEOTIDE SEQUENCE [LARGE SCALE GENOMIC DNA]</scope>
    <source>
        <strain>KACC10331 / KXO85</strain>
    </source>
</reference>
<feature type="chain" id="PRO_0000172719" description="Phosphatidylglycerol--prolipoprotein diacylglyceryl transferase">
    <location>
        <begin position="1"/>
        <end position="296"/>
    </location>
</feature>
<feature type="transmembrane region" description="Helical" evidence="1">
    <location>
        <begin position="10"/>
        <end position="30"/>
    </location>
</feature>
<feature type="transmembrane region" description="Helical" evidence="1">
    <location>
        <begin position="57"/>
        <end position="77"/>
    </location>
</feature>
<feature type="transmembrane region" description="Helical" evidence="1">
    <location>
        <begin position="92"/>
        <end position="112"/>
    </location>
</feature>
<feature type="transmembrane region" description="Helical" evidence="1">
    <location>
        <begin position="119"/>
        <end position="139"/>
    </location>
</feature>
<feature type="transmembrane region" description="Helical" evidence="1">
    <location>
        <begin position="194"/>
        <end position="214"/>
    </location>
</feature>
<feature type="transmembrane region" description="Helical" evidence="1">
    <location>
        <begin position="220"/>
        <end position="240"/>
    </location>
</feature>
<feature type="transmembrane region" description="Helical" evidence="1">
    <location>
        <begin position="254"/>
        <end position="274"/>
    </location>
</feature>
<feature type="binding site" evidence="1">
    <location>
        <position position="140"/>
    </location>
    <ligand>
        <name>a 1,2-diacyl-sn-glycero-3-phospho-(1'-sn-glycerol)</name>
        <dbReference type="ChEBI" id="CHEBI:64716"/>
    </ligand>
</feature>
<gene>
    <name evidence="1" type="primary">lgt</name>
    <name type="ordered locus">XOO3753</name>
</gene>
<sequence length="296" mass="32670">MIYLHAIDPIAFSLGPVKVHWYGLMYLAAFFSAWSLGRSRILRGRLPGVDMDGFSDLLFYGMLGVVLGGRIGYMLFYAFETFVANPLILFKVWEGGMSFHGGLLGVLVACWLWARKHRLHFFDVMDFVAPLVPLGLGFGRLGNFVGGELWGKFTQAGWGVIFPHAPELADQLPAQIQAQYAAGALNQLARHPSQLYEAALEGVVMFVVLWTFSMKPRARYALSGLFALLYGVFRFIVEFVRVPDAPIGYLAFNWLTMGQILSLPLIAVGLALLAMSRRAPVLQPVLPTPAGVEAAK</sequence>
<comment type="function">
    <text evidence="1">Catalyzes the transfer of the diacylglyceryl group from phosphatidylglycerol to the sulfhydryl group of the N-terminal cysteine of a prolipoprotein, the first step in the formation of mature lipoproteins.</text>
</comment>
<comment type="catalytic activity">
    <reaction evidence="1">
        <text>L-cysteinyl-[prolipoprotein] + a 1,2-diacyl-sn-glycero-3-phospho-(1'-sn-glycerol) = an S-1,2-diacyl-sn-glyceryl-L-cysteinyl-[prolipoprotein] + sn-glycerol 1-phosphate + H(+)</text>
        <dbReference type="Rhea" id="RHEA:56712"/>
        <dbReference type="Rhea" id="RHEA-COMP:14679"/>
        <dbReference type="Rhea" id="RHEA-COMP:14680"/>
        <dbReference type="ChEBI" id="CHEBI:15378"/>
        <dbReference type="ChEBI" id="CHEBI:29950"/>
        <dbReference type="ChEBI" id="CHEBI:57685"/>
        <dbReference type="ChEBI" id="CHEBI:64716"/>
        <dbReference type="ChEBI" id="CHEBI:140658"/>
        <dbReference type="EC" id="2.5.1.145"/>
    </reaction>
</comment>
<comment type="pathway">
    <text evidence="1">Protein modification; lipoprotein biosynthesis (diacylglyceryl transfer).</text>
</comment>
<comment type="subcellular location">
    <subcellularLocation>
        <location evidence="1">Cell inner membrane</location>
        <topology evidence="1">Multi-pass membrane protein</topology>
    </subcellularLocation>
</comment>
<comment type="similarity">
    <text evidence="1">Belongs to the Lgt family.</text>
</comment>
<name>LGT_XANOR</name>
<keyword id="KW-0997">Cell inner membrane</keyword>
<keyword id="KW-1003">Cell membrane</keyword>
<keyword id="KW-0472">Membrane</keyword>
<keyword id="KW-1185">Reference proteome</keyword>
<keyword id="KW-0808">Transferase</keyword>
<keyword id="KW-0812">Transmembrane</keyword>
<keyword id="KW-1133">Transmembrane helix</keyword>
<accession>Q5GWB4</accession>
<organism>
    <name type="scientific">Xanthomonas oryzae pv. oryzae (strain KACC10331 / KXO85)</name>
    <dbReference type="NCBI Taxonomy" id="291331"/>
    <lineage>
        <taxon>Bacteria</taxon>
        <taxon>Pseudomonadati</taxon>
        <taxon>Pseudomonadota</taxon>
        <taxon>Gammaproteobacteria</taxon>
        <taxon>Lysobacterales</taxon>
        <taxon>Lysobacteraceae</taxon>
        <taxon>Xanthomonas</taxon>
    </lineage>
</organism>
<evidence type="ECO:0000255" key="1">
    <source>
        <dbReference type="HAMAP-Rule" id="MF_01147"/>
    </source>
</evidence>
<proteinExistence type="inferred from homology"/>